<sequence>MLYHLLYPLHTTYSYFNVFRYITFRTIYAAITALIICFLLGPWLIRKLRELKMGQVIRDDGPEAHLSKQGTPTMGGVLIIFAVVVSTLLWANLTIDYVWLVLMVTLGYGLIGFADDYRKLTRQSSRGVSGKVRLACEVCIALLVSVVLYAKPGFNSTIAIPFFKTVLPDLGWGYIFLSTFIIVGAANAVNLTDGLDGLAIGPAITCFMTYLLFAYFAGNFKIASYLQIPGVAGVGELSIFCGAIVGAGIGFLWYNTYPAQVFMGDTGSLSLGGALGCLAIVTKQEILLAIVGGIFVLETFSVIFQVGWFKLSHGKRIFRMAPIHHHFELKGWAEPKVIVRFWIISILLALLAISTLKLR</sequence>
<gene>
    <name evidence="1" type="primary">mraY</name>
    <name type="ordered locus">SYNAS_06780</name>
    <name type="ORF">SYN_01743</name>
</gene>
<proteinExistence type="inferred from homology"/>
<comment type="function">
    <text evidence="1">Catalyzes the initial step of the lipid cycle reactions in the biosynthesis of the cell wall peptidoglycan: transfers peptidoglycan precursor phospho-MurNAc-pentapeptide from UDP-MurNAc-pentapeptide onto the lipid carrier undecaprenyl phosphate, yielding undecaprenyl-pyrophosphoryl-MurNAc-pentapeptide, known as lipid I.</text>
</comment>
<comment type="catalytic activity">
    <reaction evidence="1">
        <text>UDP-N-acetyl-alpha-D-muramoyl-L-alanyl-gamma-D-glutamyl-meso-2,6-diaminopimeloyl-D-alanyl-D-alanine + di-trans,octa-cis-undecaprenyl phosphate = di-trans,octa-cis-undecaprenyl diphospho-N-acetyl-alpha-D-muramoyl-L-alanyl-D-glutamyl-meso-2,6-diaminopimeloyl-D-alanyl-D-alanine + UMP</text>
        <dbReference type="Rhea" id="RHEA:28386"/>
        <dbReference type="ChEBI" id="CHEBI:57865"/>
        <dbReference type="ChEBI" id="CHEBI:60392"/>
        <dbReference type="ChEBI" id="CHEBI:61386"/>
        <dbReference type="ChEBI" id="CHEBI:61387"/>
        <dbReference type="EC" id="2.7.8.13"/>
    </reaction>
</comment>
<comment type="cofactor">
    <cofactor evidence="1">
        <name>Mg(2+)</name>
        <dbReference type="ChEBI" id="CHEBI:18420"/>
    </cofactor>
</comment>
<comment type="pathway">
    <text evidence="1">Cell wall biogenesis; peptidoglycan biosynthesis.</text>
</comment>
<comment type="subcellular location">
    <subcellularLocation>
        <location evidence="1">Cell inner membrane</location>
        <topology evidence="1">Multi-pass membrane protein</topology>
    </subcellularLocation>
</comment>
<comment type="similarity">
    <text evidence="1">Belongs to the glycosyltransferase 4 family. MraY subfamily.</text>
</comment>
<name>MRAY_SYNAS</name>
<accession>Q2LR51</accession>
<dbReference type="EC" id="2.7.8.13" evidence="1"/>
<dbReference type="EMBL" id="CP000252">
    <property type="protein sequence ID" value="ABC76557.1"/>
    <property type="molecule type" value="Genomic_DNA"/>
</dbReference>
<dbReference type="RefSeq" id="WP_011416591.1">
    <property type="nucleotide sequence ID" value="NC_007759.1"/>
</dbReference>
<dbReference type="SMR" id="Q2LR51"/>
<dbReference type="FunCoup" id="Q2LR51">
    <property type="interactions" value="369"/>
</dbReference>
<dbReference type="STRING" id="56780.SYN_01743"/>
<dbReference type="KEGG" id="sat:SYN_01743"/>
<dbReference type="eggNOG" id="COG0472">
    <property type="taxonomic scope" value="Bacteria"/>
</dbReference>
<dbReference type="HOGENOM" id="CLU_023982_0_0_7"/>
<dbReference type="InParanoid" id="Q2LR51"/>
<dbReference type="OrthoDB" id="9805475at2"/>
<dbReference type="UniPathway" id="UPA00219"/>
<dbReference type="Proteomes" id="UP000001933">
    <property type="component" value="Chromosome"/>
</dbReference>
<dbReference type="GO" id="GO:0005886">
    <property type="term" value="C:plasma membrane"/>
    <property type="evidence" value="ECO:0007669"/>
    <property type="project" value="UniProtKB-SubCell"/>
</dbReference>
<dbReference type="GO" id="GO:0046872">
    <property type="term" value="F:metal ion binding"/>
    <property type="evidence" value="ECO:0007669"/>
    <property type="project" value="UniProtKB-KW"/>
</dbReference>
<dbReference type="GO" id="GO:0008963">
    <property type="term" value="F:phospho-N-acetylmuramoyl-pentapeptide-transferase activity"/>
    <property type="evidence" value="ECO:0007669"/>
    <property type="project" value="UniProtKB-UniRule"/>
</dbReference>
<dbReference type="GO" id="GO:0051992">
    <property type="term" value="F:UDP-N-acetylmuramoyl-L-alanyl-D-glutamyl-meso-2,6-diaminopimelyl-D-alanyl-D-alanine:undecaprenyl-phosphate transferase activity"/>
    <property type="evidence" value="ECO:0007669"/>
    <property type="project" value="RHEA"/>
</dbReference>
<dbReference type="GO" id="GO:0051301">
    <property type="term" value="P:cell division"/>
    <property type="evidence" value="ECO:0007669"/>
    <property type="project" value="UniProtKB-KW"/>
</dbReference>
<dbReference type="GO" id="GO:0071555">
    <property type="term" value="P:cell wall organization"/>
    <property type="evidence" value="ECO:0007669"/>
    <property type="project" value="UniProtKB-KW"/>
</dbReference>
<dbReference type="GO" id="GO:0009252">
    <property type="term" value="P:peptidoglycan biosynthetic process"/>
    <property type="evidence" value="ECO:0007669"/>
    <property type="project" value="UniProtKB-UniRule"/>
</dbReference>
<dbReference type="GO" id="GO:0008360">
    <property type="term" value="P:regulation of cell shape"/>
    <property type="evidence" value="ECO:0007669"/>
    <property type="project" value="UniProtKB-KW"/>
</dbReference>
<dbReference type="CDD" id="cd06852">
    <property type="entry name" value="GT_MraY"/>
    <property type="match status" value="1"/>
</dbReference>
<dbReference type="HAMAP" id="MF_00038">
    <property type="entry name" value="MraY"/>
    <property type="match status" value="1"/>
</dbReference>
<dbReference type="InterPro" id="IPR000715">
    <property type="entry name" value="Glycosyl_transferase_4"/>
</dbReference>
<dbReference type="InterPro" id="IPR003524">
    <property type="entry name" value="PNAcMuramoyl-5peptid_Trfase"/>
</dbReference>
<dbReference type="InterPro" id="IPR018480">
    <property type="entry name" value="PNAcMuramoyl-5peptid_Trfase_CS"/>
</dbReference>
<dbReference type="NCBIfam" id="TIGR00445">
    <property type="entry name" value="mraY"/>
    <property type="match status" value="1"/>
</dbReference>
<dbReference type="PANTHER" id="PTHR22926">
    <property type="entry name" value="PHOSPHO-N-ACETYLMURAMOYL-PENTAPEPTIDE-TRANSFERASE"/>
    <property type="match status" value="1"/>
</dbReference>
<dbReference type="PANTHER" id="PTHR22926:SF5">
    <property type="entry name" value="PHOSPHO-N-ACETYLMURAMOYL-PENTAPEPTIDE-TRANSFERASE HOMOLOG"/>
    <property type="match status" value="1"/>
</dbReference>
<dbReference type="Pfam" id="PF00953">
    <property type="entry name" value="Glycos_transf_4"/>
    <property type="match status" value="1"/>
</dbReference>
<dbReference type="Pfam" id="PF10555">
    <property type="entry name" value="MraY_sig1"/>
    <property type="match status" value="1"/>
</dbReference>
<dbReference type="PROSITE" id="PS01347">
    <property type="entry name" value="MRAY_1"/>
    <property type="match status" value="1"/>
</dbReference>
<dbReference type="PROSITE" id="PS01348">
    <property type="entry name" value="MRAY_2"/>
    <property type="match status" value="1"/>
</dbReference>
<evidence type="ECO:0000255" key="1">
    <source>
        <dbReference type="HAMAP-Rule" id="MF_00038"/>
    </source>
</evidence>
<organism>
    <name type="scientific">Syntrophus aciditrophicus (strain SB)</name>
    <dbReference type="NCBI Taxonomy" id="56780"/>
    <lineage>
        <taxon>Bacteria</taxon>
        <taxon>Pseudomonadati</taxon>
        <taxon>Thermodesulfobacteriota</taxon>
        <taxon>Syntrophia</taxon>
        <taxon>Syntrophales</taxon>
        <taxon>Syntrophaceae</taxon>
        <taxon>Syntrophus</taxon>
    </lineage>
</organism>
<reference key="1">
    <citation type="journal article" date="2007" name="Proc. Natl. Acad. Sci. U.S.A.">
        <title>The genome of Syntrophus aciditrophicus: life at the thermodynamic limit of microbial growth.</title>
        <authorList>
            <person name="McInerney M.J."/>
            <person name="Rohlin L."/>
            <person name="Mouttaki H."/>
            <person name="Kim U."/>
            <person name="Krupp R.S."/>
            <person name="Rios-Hernandez L."/>
            <person name="Sieber J."/>
            <person name="Struchtemeyer C.G."/>
            <person name="Bhattacharyya A."/>
            <person name="Campbell J.W."/>
            <person name="Gunsalus R.P."/>
        </authorList>
    </citation>
    <scope>NUCLEOTIDE SEQUENCE [LARGE SCALE GENOMIC DNA]</scope>
    <source>
        <strain>SB</strain>
    </source>
</reference>
<keyword id="KW-0131">Cell cycle</keyword>
<keyword id="KW-0132">Cell division</keyword>
<keyword id="KW-0997">Cell inner membrane</keyword>
<keyword id="KW-1003">Cell membrane</keyword>
<keyword id="KW-0133">Cell shape</keyword>
<keyword id="KW-0961">Cell wall biogenesis/degradation</keyword>
<keyword id="KW-0460">Magnesium</keyword>
<keyword id="KW-0472">Membrane</keyword>
<keyword id="KW-0479">Metal-binding</keyword>
<keyword id="KW-0573">Peptidoglycan synthesis</keyword>
<keyword id="KW-1185">Reference proteome</keyword>
<keyword id="KW-0808">Transferase</keyword>
<keyword id="KW-0812">Transmembrane</keyword>
<keyword id="KW-1133">Transmembrane helix</keyword>
<feature type="chain" id="PRO_0000235495" description="Phospho-N-acetylmuramoyl-pentapeptide-transferase">
    <location>
        <begin position="1"/>
        <end position="359"/>
    </location>
</feature>
<feature type="transmembrane region" description="Helical" evidence="1">
    <location>
        <begin position="26"/>
        <end position="46"/>
    </location>
</feature>
<feature type="transmembrane region" description="Helical" evidence="1">
    <location>
        <begin position="75"/>
        <end position="95"/>
    </location>
</feature>
<feature type="transmembrane region" description="Helical" evidence="1">
    <location>
        <begin position="97"/>
        <end position="117"/>
    </location>
</feature>
<feature type="transmembrane region" description="Helical" evidence="1">
    <location>
        <begin position="134"/>
        <end position="154"/>
    </location>
</feature>
<feature type="transmembrane region" description="Helical" evidence="1">
    <location>
        <begin position="166"/>
        <end position="186"/>
    </location>
</feature>
<feature type="transmembrane region" description="Helical" evidence="1">
    <location>
        <begin position="197"/>
        <end position="217"/>
    </location>
</feature>
<feature type="transmembrane region" description="Helical" evidence="1">
    <location>
        <begin position="233"/>
        <end position="253"/>
    </location>
</feature>
<feature type="transmembrane region" description="Helical" evidence="1">
    <location>
        <begin position="261"/>
        <end position="281"/>
    </location>
</feature>
<feature type="transmembrane region" description="Helical" evidence="1">
    <location>
        <begin position="286"/>
        <end position="306"/>
    </location>
</feature>
<feature type="transmembrane region" description="Helical" evidence="1">
    <location>
        <begin position="336"/>
        <end position="356"/>
    </location>
</feature>
<protein>
    <recommendedName>
        <fullName evidence="1">Phospho-N-acetylmuramoyl-pentapeptide-transferase</fullName>
        <ecNumber evidence="1">2.7.8.13</ecNumber>
    </recommendedName>
    <alternativeName>
        <fullName evidence="1">UDP-MurNAc-pentapeptide phosphotransferase</fullName>
    </alternativeName>
</protein>